<accession>Q88B60</accession>
<evidence type="ECO:0000255" key="1">
    <source>
        <dbReference type="HAMAP-Rule" id="MF_00131"/>
    </source>
</evidence>
<sequence length="270" mass="28488">MSRLEQRFAQLKTEGRAVLVTFITAGDPGYDTSLKVLKGLPAAGADVIELGMPFTDPMADGVAIQLATLRALDAGQTLLKTLQMVSEFRVDDQTTPIVLMGYYNPIHRFGVEAFVAQAKEAGVDGLIIVDLPPEHDAELATPAQASGIDFIRLTTPTTDDARLPRVLERSSGFVYYVSVAGVTGAGSATTEHVTEAIARLRRHTSLPISVGFGIRTPEQAAAIARLADGVVVGSAFVDKIATAESPEQAIDGVLTLCAALAEGVRNARVS</sequence>
<organism>
    <name type="scientific">Pseudomonas syringae pv. tomato (strain ATCC BAA-871 / DC3000)</name>
    <dbReference type="NCBI Taxonomy" id="223283"/>
    <lineage>
        <taxon>Bacteria</taxon>
        <taxon>Pseudomonadati</taxon>
        <taxon>Pseudomonadota</taxon>
        <taxon>Gammaproteobacteria</taxon>
        <taxon>Pseudomonadales</taxon>
        <taxon>Pseudomonadaceae</taxon>
        <taxon>Pseudomonas</taxon>
    </lineage>
</organism>
<reference key="1">
    <citation type="journal article" date="2003" name="Proc. Natl. Acad. Sci. U.S.A.">
        <title>The complete genome sequence of the Arabidopsis and tomato pathogen Pseudomonas syringae pv. tomato DC3000.</title>
        <authorList>
            <person name="Buell C.R."/>
            <person name="Joardar V."/>
            <person name="Lindeberg M."/>
            <person name="Selengut J."/>
            <person name="Paulsen I.T."/>
            <person name="Gwinn M.L."/>
            <person name="Dodson R.J."/>
            <person name="DeBoy R.T."/>
            <person name="Durkin A.S."/>
            <person name="Kolonay J.F."/>
            <person name="Madupu R."/>
            <person name="Daugherty S.C."/>
            <person name="Brinkac L.M."/>
            <person name="Beanan M.J."/>
            <person name="Haft D.H."/>
            <person name="Nelson W.C."/>
            <person name="Davidsen T.M."/>
            <person name="Zafar N."/>
            <person name="Zhou L."/>
            <person name="Liu J."/>
            <person name="Yuan Q."/>
            <person name="Khouri H.M."/>
            <person name="Fedorova N.B."/>
            <person name="Tran B."/>
            <person name="Russell D."/>
            <person name="Berry K.J."/>
            <person name="Utterback T.R."/>
            <person name="Van Aken S.E."/>
            <person name="Feldblyum T.V."/>
            <person name="D'Ascenzo M."/>
            <person name="Deng W.-L."/>
            <person name="Ramos A.R."/>
            <person name="Alfano J.R."/>
            <person name="Cartinhour S."/>
            <person name="Chatterjee A.K."/>
            <person name="Delaney T.P."/>
            <person name="Lazarowitz S.G."/>
            <person name="Martin G.B."/>
            <person name="Schneider D.J."/>
            <person name="Tang X."/>
            <person name="Bender C.L."/>
            <person name="White O."/>
            <person name="Fraser C.M."/>
            <person name="Collmer A."/>
        </authorList>
    </citation>
    <scope>NUCLEOTIDE SEQUENCE [LARGE SCALE GENOMIC DNA]</scope>
    <source>
        <strain>ATCC BAA-871 / DC3000</strain>
    </source>
</reference>
<dbReference type="EC" id="4.2.1.20" evidence="1"/>
<dbReference type="EMBL" id="AE016853">
    <property type="protein sequence ID" value="AAO53713.1"/>
    <property type="molecule type" value="Genomic_DNA"/>
</dbReference>
<dbReference type="RefSeq" id="NP_790018.1">
    <property type="nucleotide sequence ID" value="NC_004578.1"/>
</dbReference>
<dbReference type="RefSeq" id="WP_011103014.1">
    <property type="nucleotide sequence ID" value="NC_004578.1"/>
</dbReference>
<dbReference type="SMR" id="Q88B60"/>
<dbReference type="STRING" id="223283.PSPTO_0159"/>
<dbReference type="GeneID" id="1181767"/>
<dbReference type="KEGG" id="pst:PSPTO_0159"/>
<dbReference type="PATRIC" id="fig|223283.9.peg.165"/>
<dbReference type="eggNOG" id="COG0159">
    <property type="taxonomic scope" value="Bacteria"/>
</dbReference>
<dbReference type="HOGENOM" id="CLU_016734_0_4_6"/>
<dbReference type="OrthoDB" id="9804578at2"/>
<dbReference type="PhylomeDB" id="Q88B60"/>
<dbReference type="UniPathway" id="UPA00035">
    <property type="reaction ID" value="UER00044"/>
</dbReference>
<dbReference type="Proteomes" id="UP000002515">
    <property type="component" value="Chromosome"/>
</dbReference>
<dbReference type="GO" id="GO:0005829">
    <property type="term" value="C:cytosol"/>
    <property type="evidence" value="ECO:0007669"/>
    <property type="project" value="TreeGrafter"/>
</dbReference>
<dbReference type="GO" id="GO:0004834">
    <property type="term" value="F:tryptophan synthase activity"/>
    <property type="evidence" value="ECO:0007669"/>
    <property type="project" value="UniProtKB-UniRule"/>
</dbReference>
<dbReference type="CDD" id="cd04724">
    <property type="entry name" value="Tryptophan_synthase_alpha"/>
    <property type="match status" value="1"/>
</dbReference>
<dbReference type="FunFam" id="3.20.20.70:FF:000037">
    <property type="entry name" value="Tryptophan synthase alpha chain"/>
    <property type="match status" value="1"/>
</dbReference>
<dbReference type="Gene3D" id="3.20.20.70">
    <property type="entry name" value="Aldolase class I"/>
    <property type="match status" value="1"/>
</dbReference>
<dbReference type="HAMAP" id="MF_00131">
    <property type="entry name" value="Trp_synth_alpha"/>
    <property type="match status" value="1"/>
</dbReference>
<dbReference type="InterPro" id="IPR013785">
    <property type="entry name" value="Aldolase_TIM"/>
</dbReference>
<dbReference type="InterPro" id="IPR011060">
    <property type="entry name" value="RibuloseP-bd_barrel"/>
</dbReference>
<dbReference type="InterPro" id="IPR018204">
    <property type="entry name" value="Trp_synthase_alpha_AS"/>
</dbReference>
<dbReference type="InterPro" id="IPR002028">
    <property type="entry name" value="Trp_synthase_suA"/>
</dbReference>
<dbReference type="NCBIfam" id="TIGR00262">
    <property type="entry name" value="trpA"/>
    <property type="match status" value="1"/>
</dbReference>
<dbReference type="PANTHER" id="PTHR43406:SF1">
    <property type="entry name" value="TRYPTOPHAN SYNTHASE ALPHA CHAIN, CHLOROPLASTIC"/>
    <property type="match status" value="1"/>
</dbReference>
<dbReference type="PANTHER" id="PTHR43406">
    <property type="entry name" value="TRYPTOPHAN SYNTHASE, ALPHA CHAIN"/>
    <property type="match status" value="1"/>
</dbReference>
<dbReference type="Pfam" id="PF00290">
    <property type="entry name" value="Trp_syntA"/>
    <property type="match status" value="1"/>
</dbReference>
<dbReference type="SUPFAM" id="SSF51366">
    <property type="entry name" value="Ribulose-phoshate binding barrel"/>
    <property type="match status" value="1"/>
</dbReference>
<dbReference type="PROSITE" id="PS00167">
    <property type="entry name" value="TRP_SYNTHASE_ALPHA"/>
    <property type="match status" value="1"/>
</dbReference>
<comment type="function">
    <text evidence="1">The alpha subunit is responsible for the aldol cleavage of indoleglycerol phosphate to indole and glyceraldehyde 3-phosphate.</text>
</comment>
<comment type="catalytic activity">
    <reaction evidence="1">
        <text>(1S,2R)-1-C-(indol-3-yl)glycerol 3-phosphate + L-serine = D-glyceraldehyde 3-phosphate + L-tryptophan + H2O</text>
        <dbReference type="Rhea" id="RHEA:10532"/>
        <dbReference type="ChEBI" id="CHEBI:15377"/>
        <dbReference type="ChEBI" id="CHEBI:33384"/>
        <dbReference type="ChEBI" id="CHEBI:57912"/>
        <dbReference type="ChEBI" id="CHEBI:58866"/>
        <dbReference type="ChEBI" id="CHEBI:59776"/>
        <dbReference type="EC" id="4.2.1.20"/>
    </reaction>
</comment>
<comment type="pathway">
    <text evidence="1">Amino-acid biosynthesis; L-tryptophan biosynthesis; L-tryptophan from chorismate: step 5/5.</text>
</comment>
<comment type="subunit">
    <text evidence="1">Tetramer of two alpha and two beta chains.</text>
</comment>
<comment type="similarity">
    <text evidence="1">Belongs to the TrpA family.</text>
</comment>
<proteinExistence type="inferred from homology"/>
<gene>
    <name evidence="1" type="primary">trpA</name>
    <name type="ordered locus">PSPTO_0159</name>
</gene>
<keyword id="KW-0028">Amino-acid biosynthesis</keyword>
<keyword id="KW-0057">Aromatic amino acid biosynthesis</keyword>
<keyword id="KW-0456">Lyase</keyword>
<keyword id="KW-1185">Reference proteome</keyword>
<keyword id="KW-0822">Tryptophan biosynthesis</keyword>
<protein>
    <recommendedName>
        <fullName evidence="1">Tryptophan synthase alpha chain</fullName>
        <ecNumber evidence="1">4.2.1.20</ecNumber>
    </recommendedName>
</protein>
<name>TRPA_PSESM</name>
<feature type="chain" id="PRO_0000098828" description="Tryptophan synthase alpha chain">
    <location>
        <begin position="1"/>
        <end position="270"/>
    </location>
</feature>
<feature type="active site" description="Proton acceptor" evidence="1">
    <location>
        <position position="49"/>
    </location>
</feature>
<feature type="active site" description="Proton acceptor" evidence="1">
    <location>
        <position position="60"/>
    </location>
</feature>